<comment type="function">
    <text evidence="1">Provides the (R)-glutamate required for cell wall biosynthesis.</text>
</comment>
<comment type="catalytic activity">
    <reaction evidence="1">
        <text>L-glutamate = D-glutamate</text>
        <dbReference type="Rhea" id="RHEA:12813"/>
        <dbReference type="ChEBI" id="CHEBI:29985"/>
        <dbReference type="ChEBI" id="CHEBI:29986"/>
        <dbReference type="EC" id="5.1.1.3"/>
    </reaction>
</comment>
<comment type="pathway">
    <text evidence="1">Cell wall biogenesis; peptidoglycan biosynthesis.</text>
</comment>
<comment type="similarity">
    <text evidence="1">Belongs to the aspartate/glutamate racemases family.</text>
</comment>
<dbReference type="EC" id="5.1.1.3" evidence="1"/>
<dbReference type="EMBL" id="CP000875">
    <property type="protein sequence ID" value="ABX06846.1"/>
    <property type="molecule type" value="Genomic_DNA"/>
</dbReference>
<dbReference type="SMR" id="A9AXC6"/>
<dbReference type="FunCoup" id="A9AXC6">
    <property type="interactions" value="236"/>
</dbReference>
<dbReference type="STRING" id="316274.Haur_4214"/>
<dbReference type="KEGG" id="hau:Haur_4214"/>
<dbReference type="eggNOG" id="COG0796">
    <property type="taxonomic scope" value="Bacteria"/>
</dbReference>
<dbReference type="HOGENOM" id="CLU_052344_1_0_0"/>
<dbReference type="InParanoid" id="A9AXC6"/>
<dbReference type="UniPathway" id="UPA00219"/>
<dbReference type="Proteomes" id="UP000000787">
    <property type="component" value="Chromosome"/>
</dbReference>
<dbReference type="GO" id="GO:0008881">
    <property type="term" value="F:glutamate racemase activity"/>
    <property type="evidence" value="ECO:0007669"/>
    <property type="project" value="UniProtKB-UniRule"/>
</dbReference>
<dbReference type="GO" id="GO:0071555">
    <property type="term" value="P:cell wall organization"/>
    <property type="evidence" value="ECO:0007669"/>
    <property type="project" value="UniProtKB-KW"/>
</dbReference>
<dbReference type="GO" id="GO:0009252">
    <property type="term" value="P:peptidoglycan biosynthetic process"/>
    <property type="evidence" value="ECO:0007669"/>
    <property type="project" value="UniProtKB-UniRule"/>
</dbReference>
<dbReference type="GO" id="GO:0008360">
    <property type="term" value="P:regulation of cell shape"/>
    <property type="evidence" value="ECO:0007669"/>
    <property type="project" value="UniProtKB-KW"/>
</dbReference>
<dbReference type="FunFam" id="3.40.50.1860:FF:000001">
    <property type="entry name" value="Glutamate racemase"/>
    <property type="match status" value="1"/>
</dbReference>
<dbReference type="Gene3D" id="3.40.50.1860">
    <property type="match status" value="2"/>
</dbReference>
<dbReference type="HAMAP" id="MF_00258">
    <property type="entry name" value="Glu_racemase"/>
    <property type="match status" value="1"/>
</dbReference>
<dbReference type="InterPro" id="IPR015942">
    <property type="entry name" value="Asp/Glu/hydantoin_racemase"/>
</dbReference>
<dbReference type="InterPro" id="IPR001920">
    <property type="entry name" value="Asp/Glu_race"/>
</dbReference>
<dbReference type="InterPro" id="IPR018187">
    <property type="entry name" value="Asp/Glu_racemase_AS_1"/>
</dbReference>
<dbReference type="InterPro" id="IPR033134">
    <property type="entry name" value="Asp/Glu_racemase_AS_2"/>
</dbReference>
<dbReference type="InterPro" id="IPR004391">
    <property type="entry name" value="Glu_race"/>
</dbReference>
<dbReference type="NCBIfam" id="TIGR00067">
    <property type="entry name" value="glut_race"/>
    <property type="match status" value="1"/>
</dbReference>
<dbReference type="PANTHER" id="PTHR21198">
    <property type="entry name" value="GLUTAMATE RACEMASE"/>
    <property type="match status" value="1"/>
</dbReference>
<dbReference type="PANTHER" id="PTHR21198:SF2">
    <property type="entry name" value="GLUTAMATE RACEMASE"/>
    <property type="match status" value="1"/>
</dbReference>
<dbReference type="Pfam" id="PF01177">
    <property type="entry name" value="Asp_Glu_race"/>
    <property type="match status" value="1"/>
</dbReference>
<dbReference type="SUPFAM" id="SSF53681">
    <property type="entry name" value="Aspartate/glutamate racemase"/>
    <property type="match status" value="2"/>
</dbReference>
<dbReference type="PROSITE" id="PS00923">
    <property type="entry name" value="ASP_GLU_RACEMASE_1"/>
    <property type="match status" value="1"/>
</dbReference>
<dbReference type="PROSITE" id="PS00924">
    <property type="entry name" value="ASP_GLU_RACEMASE_2"/>
    <property type="match status" value="1"/>
</dbReference>
<organism>
    <name type="scientific">Herpetosiphon aurantiacus (strain ATCC 23779 / DSM 785 / 114-95)</name>
    <dbReference type="NCBI Taxonomy" id="316274"/>
    <lineage>
        <taxon>Bacteria</taxon>
        <taxon>Bacillati</taxon>
        <taxon>Chloroflexota</taxon>
        <taxon>Chloroflexia</taxon>
        <taxon>Herpetosiphonales</taxon>
        <taxon>Herpetosiphonaceae</taxon>
        <taxon>Herpetosiphon</taxon>
    </lineage>
</organism>
<keyword id="KW-0133">Cell shape</keyword>
<keyword id="KW-0961">Cell wall biogenesis/degradation</keyword>
<keyword id="KW-0413">Isomerase</keyword>
<keyword id="KW-0573">Peptidoglycan synthesis</keyword>
<evidence type="ECO:0000255" key="1">
    <source>
        <dbReference type="HAMAP-Rule" id="MF_00258"/>
    </source>
</evidence>
<accession>A9AXC6</accession>
<name>MURI_HERA2</name>
<feature type="chain" id="PRO_1000114049" description="Glutamate racemase">
    <location>
        <begin position="1"/>
        <end position="254"/>
    </location>
</feature>
<feature type="active site" description="Proton donor/acceptor" evidence="1">
    <location>
        <position position="73"/>
    </location>
</feature>
<feature type="active site" description="Proton donor/acceptor" evidence="1">
    <location>
        <position position="183"/>
    </location>
</feature>
<feature type="binding site" evidence="1">
    <location>
        <begin position="10"/>
        <end position="11"/>
    </location>
    <ligand>
        <name>substrate</name>
    </ligand>
</feature>
<feature type="binding site" evidence="1">
    <location>
        <begin position="42"/>
        <end position="43"/>
    </location>
    <ligand>
        <name>substrate</name>
    </ligand>
</feature>
<feature type="binding site" evidence="1">
    <location>
        <begin position="74"/>
        <end position="75"/>
    </location>
    <ligand>
        <name>substrate</name>
    </ligand>
</feature>
<feature type="binding site" evidence="1">
    <location>
        <begin position="184"/>
        <end position="185"/>
    </location>
    <ligand>
        <name>substrate</name>
    </ligand>
</feature>
<protein>
    <recommendedName>
        <fullName evidence="1">Glutamate racemase</fullName>
        <ecNumber evidence="1">5.1.1.3</ecNumber>
    </recommendedName>
</protein>
<sequence>MKDQPIGMFDSGVGGLSTLRDLRALLPHEDIIYYADTGNCPYGGRSHEEIVALSERITYILLERGVKLIVVACNTATLHAVDYLREHFSISFVGMEPGIKPAIAQTKTGVVGVMATQATVAGERFQRLIARYAGDVQVVPQACPGLVELIEAGELQSETTRDAVARYVAPLLKAGADTIVLGCTHYPFLRSLIADVAGPNVALLDTGAAVARQTQRLLAAADLLNPQTSQGSIEWLTSGDPAHFAKIRQCLEIE</sequence>
<reference key="1">
    <citation type="journal article" date="2011" name="Stand. Genomic Sci.">
        <title>Complete genome sequence of the filamentous gliding predatory bacterium Herpetosiphon aurantiacus type strain (114-95(T)).</title>
        <authorList>
            <person name="Kiss H."/>
            <person name="Nett M."/>
            <person name="Domin N."/>
            <person name="Martin K."/>
            <person name="Maresca J.A."/>
            <person name="Copeland A."/>
            <person name="Lapidus A."/>
            <person name="Lucas S."/>
            <person name="Berry K.W."/>
            <person name="Glavina Del Rio T."/>
            <person name="Dalin E."/>
            <person name="Tice H."/>
            <person name="Pitluck S."/>
            <person name="Richardson P."/>
            <person name="Bruce D."/>
            <person name="Goodwin L."/>
            <person name="Han C."/>
            <person name="Detter J.C."/>
            <person name="Schmutz J."/>
            <person name="Brettin T."/>
            <person name="Land M."/>
            <person name="Hauser L."/>
            <person name="Kyrpides N.C."/>
            <person name="Ivanova N."/>
            <person name="Goeker M."/>
            <person name="Woyke T."/>
            <person name="Klenk H.P."/>
            <person name="Bryant D.A."/>
        </authorList>
    </citation>
    <scope>NUCLEOTIDE SEQUENCE [LARGE SCALE GENOMIC DNA]</scope>
    <source>
        <strain>ATCC 23779 / DSM 785 / 114-95</strain>
    </source>
</reference>
<gene>
    <name evidence="1" type="primary">murI</name>
    <name type="ordered locus">Haur_4214</name>
</gene>
<proteinExistence type="inferred from homology"/>